<keyword id="KW-0010">Activator</keyword>
<keyword id="KW-0238">DNA-binding</keyword>
<keyword id="KW-0936">Ethylene signaling pathway</keyword>
<keyword id="KW-0539">Nucleus</keyword>
<keyword id="KW-0611">Plant defense</keyword>
<keyword id="KW-1185">Reference proteome</keyword>
<keyword id="KW-0804">Transcription</keyword>
<keyword id="KW-0805">Transcription regulation</keyword>
<comment type="function">
    <text evidence="5 6 7 9 12">Acts as a transcriptional activator. Binds to the GCC-box pathogenesis-related promoter element. Involved in the regulation of gene expression during the plant development, and/or mediated by stress factors and by components of stress signal transduction pathways. Seems to be a key integrator of ethylene and jasmonate signals in the regulation of ethylene/jasmonate-dependent defenses. Can mediate resistance to necrotizing fungi (Botrytis cinerea and Plectosphaerella cucumerina) and to soil borne fungi (Fusarium oxysporum conglutinans and Fusiarium oxysporum lycopersici), but probably not to necrotizing bacteria (Pseudomonas syringae tomato).</text>
</comment>
<comment type="subunit">
    <text evidence="10 11">Interacts with MED25 and TAF12B.</text>
</comment>
<comment type="interaction">
    <interactant intactId="EBI-15197679">
        <id>Q8LDC8</id>
    </interactant>
    <interactant intactId="EBI-4424427">
        <id>Q8L7G9</id>
        <label>DL4875C</label>
    </interactant>
    <organismsDiffer>false</organismsDiffer>
    <experiments>3</experiments>
</comment>
<comment type="subcellular location">
    <subcellularLocation>
        <location evidence="13">Nucleus</location>
    </subcellularLocation>
</comment>
<comment type="tissue specificity">
    <text evidence="5">Ubiquitously expressed, mostly in flowers and rosettes after ethylene treatment.</text>
</comment>
<comment type="induction">
    <text evidence="5 6 7 8 9 12">Induced by Pseudomonas syringae tomato (both virulent and avirulent avrRpt2 strains), independently of PAD4. Ethylene induction is completely dependent on functional ETHYLENE-INSENSITIVE2 (EIN2), ETHYLENE-INSENSITIVE3 (EIN3), which is itself a transcription factor and CORONATIVE-INSENSITIVE1 (COI1) proteins. Induction by jasmonate, B.cinerea or F.oxysporum as well as the synergistic induction by ethylene and jasmonate requires EIN2 and COI1. Induction by methyl jasmonate (MeJA) is independent of JAR1. Induction by salicylic acid (SA) is dependent on NPR1 but not on PAD4. Seems not to be induced by Alternaria brassicicola.</text>
</comment>
<comment type="domain">
    <text evidence="1">The AP2/ERF domain binds specifically to the 5'-GCCGCC-3' motif. The affinity of this binding is higher if the seventh amino-acid of this domain is basic (By similarity).</text>
</comment>
<comment type="similarity">
    <text evidence="13">Belongs to the AP2/ERF transcription factor family. ERF subfamily.</text>
</comment>
<comment type="caution">
    <text evidence="13">Two different genes At3g23240 and At4g17500 were assigned the same gene name ERF1.</text>
</comment>
<organism>
    <name type="scientific">Arabidopsis thaliana</name>
    <name type="common">Mouse-ear cress</name>
    <dbReference type="NCBI Taxonomy" id="3702"/>
    <lineage>
        <taxon>Eukaryota</taxon>
        <taxon>Viridiplantae</taxon>
        <taxon>Streptophyta</taxon>
        <taxon>Embryophyta</taxon>
        <taxon>Tracheophyta</taxon>
        <taxon>Spermatophyta</taxon>
        <taxon>Magnoliopsida</taxon>
        <taxon>eudicotyledons</taxon>
        <taxon>Gunneridae</taxon>
        <taxon>Pentapetalae</taxon>
        <taxon>rosids</taxon>
        <taxon>malvids</taxon>
        <taxon>Brassicales</taxon>
        <taxon>Brassicaceae</taxon>
        <taxon>Camelineae</taxon>
        <taxon>Arabidopsis</taxon>
    </lineage>
</organism>
<dbReference type="EMBL" id="AF076277">
    <property type="protein sequence ID" value="AAD03544.1"/>
    <property type="molecule type" value="mRNA"/>
</dbReference>
<dbReference type="EMBL" id="AF076278">
    <property type="protein sequence ID" value="AAD03545.1"/>
    <property type="molecule type" value="Genomic_DNA"/>
</dbReference>
<dbReference type="EMBL" id="AB025608">
    <property type="protein sequence ID" value="BAA95737.1"/>
    <property type="molecule type" value="Genomic_DNA"/>
</dbReference>
<dbReference type="EMBL" id="CP002686">
    <property type="protein sequence ID" value="AEE76738.1"/>
    <property type="molecule type" value="Genomic_DNA"/>
</dbReference>
<dbReference type="EMBL" id="AF428390">
    <property type="protein sequence ID" value="AAL16158.1"/>
    <property type="molecule type" value="mRNA"/>
</dbReference>
<dbReference type="EMBL" id="AY133629">
    <property type="protein sequence ID" value="AAM91459.1"/>
    <property type="molecule type" value="mRNA"/>
</dbReference>
<dbReference type="EMBL" id="AY086078">
    <property type="protein sequence ID" value="AAM63284.1"/>
    <property type="molecule type" value="mRNA"/>
</dbReference>
<dbReference type="RefSeq" id="NP_188965.1">
    <property type="nucleotide sequence ID" value="NM_113225.3"/>
</dbReference>
<dbReference type="SMR" id="Q8LDC8"/>
<dbReference type="BioGRID" id="7234">
    <property type="interactions" value="12"/>
</dbReference>
<dbReference type="FunCoup" id="Q8LDC8">
    <property type="interactions" value="447"/>
</dbReference>
<dbReference type="IntAct" id="Q8LDC8">
    <property type="interactions" value="12"/>
</dbReference>
<dbReference type="STRING" id="3702.Q8LDC8"/>
<dbReference type="PaxDb" id="3702-AT3G23240.1"/>
<dbReference type="EnsemblPlants" id="AT3G23240.1">
    <property type="protein sequence ID" value="AT3G23240.1"/>
    <property type="gene ID" value="AT3G23240"/>
</dbReference>
<dbReference type="GeneID" id="821902"/>
<dbReference type="Gramene" id="AT3G23240.1">
    <property type="protein sequence ID" value="AT3G23240.1"/>
    <property type="gene ID" value="AT3G23240"/>
</dbReference>
<dbReference type="KEGG" id="ath:AT3G23240"/>
<dbReference type="Araport" id="AT3G23240"/>
<dbReference type="TAIR" id="AT3G23240">
    <property type="gene designation" value="ERF1"/>
</dbReference>
<dbReference type="eggNOG" id="ENOG502RBAX">
    <property type="taxonomic scope" value="Eukaryota"/>
</dbReference>
<dbReference type="HOGENOM" id="CLU_058713_1_1_1"/>
<dbReference type="InParanoid" id="Q8LDC8"/>
<dbReference type="OMA" id="TYEDGCS"/>
<dbReference type="PhylomeDB" id="Q8LDC8"/>
<dbReference type="PRO" id="PR:Q8LDC8"/>
<dbReference type="Proteomes" id="UP000006548">
    <property type="component" value="Chromosome 3"/>
</dbReference>
<dbReference type="ExpressionAtlas" id="Q8LDC8">
    <property type="expression patterns" value="baseline and differential"/>
</dbReference>
<dbReference type="GO" id="GO:0005634">
    <property type="term" value="C:nucleus"/>
    <property type="evidence" value="ECO:0000304"/>
    <property type="project" value="TAIR"/>
</dbReference>
<dbReference type="GO" id="GO:0003677">
    <property type="term" value="F:DNA binding"/>
    <property type="evidence" value="ECO:0000314"/>
    <property type="project" value="TAIR"/>
</dbReference>
<dbReference type="GO" id="GO:0003700">
    <property type="term" value="F:DNA-binding transcription factor activity"/>
    <property type="evidence" value="ECO:0000250"/>
    <property type="project" value="TAIR"/>
</dbReference>
<dbReference type="GO" id="GO:0000976">
    <property type="term" value="F:transcription cis-regulatory region binding"/>
    <property type="evidence" value="ECO:0000353"/>
    <property type="project" value="TAIR"/>
</dbReference>
<dbReference type="GO" id="GO:0006952">
    <property type="term" value="P:defense response"/>
    <property type="evidence" value="ECO:0000315"/>
    <property type="project" value="TAIR"/>
</dbReference>
<dbReference type="GO" id="GO:0009873">
    <property type="term" value="P:ethylene-activated signaling pathway"/>
    <property type="evidence" value="ECO:0000316"/>
    <property type="project" value="TAIR"/>
</dbReference>
<dbReference type="GO" id="GO:0009867">
    <property type="term" value="P:jasmonic acid mediated signaling pathway"/>
    <property type="evidence" value="ECO:0000304"/>
    <property type="project" value="TAIR"/>
</dbReference>
<dbReference type="CDD" id="cd00018">
    <property type="entry name" value="AP2"/>
    <property type="match status" value="1"/>
</dbReference>
<dbReference type="FunFam" id="3.30.730.10:FF:000001">
    <property type="entry name" value="Ethylene-responsive transcription factor 2"/>
    <property type="match status" value="1"/>
</dbReference>
<dbReference type="Gene3D" id="3.30.730.10">
    <property type="entry name" value="AP2/ERF domain"/>
    <property type="match status" value="1"/>
</dbReference>
<dbReference type="InterPro" id="IPR001471">
    <property type="entry name" value="AP2/ERF_dom"/>
</dbReference>
<dbReference type="InterPro" id="IPR036955">
    <property type="entry name" value="AP2/ERF_dom_sf"/>
</dbReference>
<dbReference type="InterPro" id="IPR016177">
    <property type="entry name" value="DNA-bd_dom_sf"/>
</dbReference>
<dbReference type="InterPro" id="IPR044808">
    <property type="entry name" value="ERF_plant"/>
</dbReference>
<dbReference type="PANTHER" id="PTHR31190">
    <property type="entry name" value="DNA-BINDING DOMAIN"/>
    <property type="match status" value="1"/>
</dbReference>
<dbReference type="PANTHER" id="PTHR31190:SF132">
    <property type="entry name" value="ETHYLENE-RESPONSIVE TRANSCRIPTION FACTOR 1B"/>
    <property type="match status" value="1"/>
</dbReference>
<dbReference type="Pfam" id="PF00847">
    <property type="entry name" value="AP2"/>
    <property type="match status" value="1"/>
</dbReference>
<dbReference type="PRINTS" id="PR00367">
    <property type="entry name" value="ETHRSPELEMNT"/>
</dbReference>
<dbReference type="SMART" id="SM00380">
    <property type="entry name" value="AP2"/>
    <property type="match status" value="1"/>
</dbReference>
<dbReference type="SUPFAM" id="SSF54171">
    <property type="entry name" value="DNA-binding domain"/>
    <property type="match status" value="1"/>
</dbReference>
<dbReference type="PROSITE" id="PS51032">
    <property type="entry name" value="AP2_ERF"/>
    <property type="match status" value="1"/>
</dbReference>
<reference key="1">
    <citation type="journal article" date="1998" name="Genes Dev.">
        <title>Nuclear events in ethylene signaling: a transcriptional cascade mediated by ETHYLENE-INSENSITIVE3 and ETHYLENE-RESPONSE-FACTOR1.</title>
        <authorList>
            <person name="Solano R."/>
            <person name="Stepanova A.N."/>
            <person name="Chao Q."/>
            <person name="Ecker J.R."/>
        </authorList>
    </citation>
    <scope>NUCLEOTIDE SEQUENCE [GENOMIC DNA / MRNA]</scope>
    <scope>FUNCTION</scope>
    <scope>INDUCTION</scope>
    <source>
        <strain>cv. Columbia</strain>
    </source>
</reference>
<reference key="2">
    <citation type="journal article" date="2000" name="DNA Res.">
        <title>Structural analysis of Arabidopsis thaliana chromosome 3. I. Sequence features of the regions of 4,504,864 bp covered by sixty P1 and TAC clones.</title>
        <authorList>
            <person name="Sato S."/>
            <person name="Nakamura Y."/>
            <person name="Kaneko T."/>
            <person name="Katoh T."/>
            <person name="Asamizu E."/>
            <person name="Tabata S."/>
        </authorList>
    </citation>
    <scope>NUCLEOTIDE SEQUENCE [LARGE SCALE GENOMIC DNA]</scope>
    <source>
        <strain>cv. Columbia</strain>
    </source>
</reference>
<reference key="3">
    <citation type="journal article" date="2017" name="Plant J.">
        <title>Araport11: a complete reannotation of the Arabidopsis thaliana reference genome.</title>
        <authorList>
            <person name="Cheng C.Y."/>
            <person name="Krishnakumar V."/>
            <person name="Chan A.P."/>
            <person name="Thibaud-Nissen F."/>
            <person name="Schobel S."/>
            <person name="Town C.D."/>
        </authorList>
    </citation>
    <scope>GENOME REANNOTATION</scope>
    <source>
        <strain>cv. Columbia</strain>
    </source>
</reference>
<reference key="4">
    <citation type="journal article" date="2003" name="Science">
        <title>Empirical analysis of transcriptional activity in the Arabidopsis genome.</title>
        <authorList>
            <person name="Yamada K."/>
            <person name="Lim J."/>
            <person name="Dale J.M."/>
            <person name="Chen H."/>
            <person name="Shinn P."/>
            <person name="Palm C.J."/>
            <person name="Southwick A.M."/>
            <person name="Wu H.C."/>
            <person name="Kim C.J."/>
            <person name="Nguyen M."/>
            <person name="Pham P.K."/>
            <person name="Cheuk R.F."/>
            <person name="Karlin-Newmann G."/>
            <person name="Liu S.X."/>
            <person name="Lam B."/>
            <person name="Sakano H."/>
            <person name="Wu T."/>
            <person name="Yu G."/>
            <person name="Miranda M."/>
            <person name="Quach H.L."/>
            <person name="Tripp M."/>
            <person name="Chang C.H."/>
            <person name="Lee J.M."/>
            <person name="Toriumi M.J."/>
            <person name="Chan M.M."/>
            <person name="Tang C.C."/>
            <person name="Onodera C.S."/>
            <person name="Deng J.M."/>
            <person name="Akiyama K."/>
            <person name="Ansari Y."/>
            <person name="Arakawa T."/>
            <person name="Banh J."/>
            <person name="Banno F."/>
            <person name="Bowser L."/>
            <person name="Brooks S.Y."/>
            <person name="Carninci P."/>
            <person name="Chao Q."/>
            <person name="Choy N."/>
            <person name="Enju A."/>
            <person name="Goldsmith A.D."/>
            <person name="Gurjal M."/>
            <person name="Hansen N.F."/>
            <person name="Hayashizaki Y."/>
            <person name="Johnson-Hopson C."/>
            <person name="Hsuan V.W."/>
            <person name="Iida K."/>
            <person name="Karnes M."/>
            <person name="Khan S."/>
            <person name="Koesema E."/>
            <person name="Ishida J."/>
            <person name="Jiang P.X."/>
            <person name="Jones T."/>
            <person name="Kawai J."/>
            <person name="Kamiya A."/>
            <person name="Meyers C."/>
            <person name="Nakajima M."/>
            <person name="Narusaka M."/>
            <person name="Seki M."/>
            <person name="Sakurai T."/>
            <person name="Satou M."/>
            <person name="Tamse R."/>
            <person name="Vaysberg M."/>
            <person name="Wallender E.K."/>
            <person name="Wong C."/>
            <person name="Yamamura Y."/>
            <person name="Yuan S."/>
            <person name="Shinozaki K."/>
            <person name="Davis R.W."/>
            <person name="Theologis A."/>
            <person name="Ecker J.R."/>
        </authorList>
    </citation>
    <scope>NUCLEOTIDE SEQUENCE [LARGE SCALE MRNA]</scope>
    <source>
        <strain>cv. Columbia</strain>
    </source>
</reference>
<reference key="5">
    <citation type="submission" date="2002-03" db="EMBL/GenBank/DDBJ databases">
        <title>Full-length cDNA from Arabidopsis thaliana.</title>
        <authorList>
            <person name="Brover V.V."/>
            <person name="Troukhan M.E."/>
            <person name="Alexandrov N.A."/>
            <person name="Lu Y.-P."/>
            <person name="Flavell R.B."/>
            <person name="Feldmann K.A."/>
        </authorList>
    </citation>
    <scope>NUCLEOTIDE SEQUENCE [LARGE SCALE MRNA]</scope>
</reference>
<reference key="6">
    <citation type="journal article" date="2002" name="Plant J.">
        <title>Constitutive expression of ETHYLENE-RESPONSE-FACTOR1 in Arabidopsis confers resistance to several necrotrophic fungi.</title>
        <authorList>
            <person name="Berrocal-Lobo M."/>
            <person name="Molina A."/>
            <person name="Solano R."/>
        </authorList>
    </citation>
    <scope>FUNCTION</scope>
    <scope>INDUCTION</scope>
</reference>
<reference key="7">
    <citation type="journal article" date="2002" name="Plant Physiol.">
        <title>Identification of Arabidopsis ethylene-responsive element binding factors with distinct induction kinetics after pathogen infection.</title>
        <authorList>
            <person name="Onate-Sanchez L."/>
            <person name="Singh K.B."/>
        </authorList>
    </citation>
    <scope>FUNCTION</scope>
    <scope>TISSUE SPECIFICITY</scope>
    <scope>INDUCTION</scope>
</reference>
<reference key="8">
    <citation type="journal article" date="2003" name="Plant Cell">
        <title>ETHYLENE RESPONSE FACTOR1 integrates signals from ethylene and jasmonate pathways in plant defense.</title>
        <authorList>
            <person name="Lorenzo O."/>
            <person name="Piqueras R."/>
            <person name="Sanchez-Serrano J.J."/>
            <person name="Solano R."/>
        </authorList>
    </citation>
    <scope>FUNCTION</scope>
    <scope>INDUCTION</scope>
</reference>
<reference key="9">
    <citation type="journal article" date="2003" name="Plant Physiol.">
        <title>A role for the GCC-box in jasmonate-mediated activation of the PDF1.2 gene of Arabidopsis.</title>
        <authorList>
            <person name="Brown R.L."/>
            <person name="Kazan K."/>
            <person name="McGrath K.C."/>
            <person name="Maclean D.J."/>
            <person name="Manners J.M."/>
        </authorList>
    </citation>
    <scope>INDUCTION</scope>
</reference>
<reference key="10">
    <citation type="journal article" date="2004" name="Mol. Plant Microbe Interact.">
        <title>Ethylene response factor 1 mediates Arabidopsis resistance to the soilborne fungus Fusarium oxysporum.</title>
        <authorList>
            <person name="Berrocal-Lobo M."/>
            <person name="Molina A."/>
        </authorList>
    </citation>
    <scope>FUNCTION</scope>
    <scope>INDUCTION</scope>
</reference>
<reference key="11">
    <citation type="journal article" date="2006" name="Plant Physiol.">
        <title>Genome-wide analysis of the ERF gene family in Arabidopsis and rice.</title>
        <authorList>
            <person name="Nakano T."/>
            <person name="Suzuki K."/>
            <person name="Fujimura T."/>
            <person name="Shinshi H."/>
        </authorList>
    </citation>
    <scope>GENE FAMILY</scope>
    <scope>NOMENCLATURE</scope>
</reference>
<reference key="12">
    <citation type="journal article" date="2007" name="J. Exp. Bot.">
        <title>Arabidopsis enhanced ethylene response 4 encodes an EIN3-interacting TFIID transcription factor required for proper ethylene response, including ERF1 induction.</title>
        <authorList>
            <person name="Robles L.M."/>
            <person name="Wampole J.S."/>
            <person name="Christians M.J."/>
            <person name="Larsen P.B."/>
        </authorList>
    </citation>
    <scope>INTERACTION WITH TAF12B</scope>
    <source>
        <strain>cv. Wassilewskija</strain>
    </source>
</reference>
<reference key="13">
    <citation type="journal article" date="2011" name="Mol. Plant">
        <title>A high-throughput screening system for Arabidopsis transcription factors and its application to Med25-dependent transcriptional regulation.</title>
        <authorList>
            <person name="Ou B."/>
            <person name="Yin K.Q."/>
            <person name="Liu S.N."/>
            <person name="Yang Y."/>
            <person name="Gu T."/>
            <person name="Wing Hui J.M."/>
            <person name="Zhang L."/>
            <person name="Miao J."/>
            <person name="Kondou Y."/>
            <person name="Matsui M."/>
            <person name="Gu H.Y."/>
            <person name="Qu L.J."/>
        </authorList>
    </citation>
    <scope>INTERACTION WITH MED25</scope>
</reference>
<proteinExistence type="evidence at protein level"/>
<sequence length="218" mass="24695">MDPFLIQSPFSGFSPEYSIGSSPDSFSSSSSNNYSLPFNENDSEEMFLYGLIEQSTQQTYIDSDSQDLPIKSVSSRKSEKSYRGVRRRPWGKFAAEIRDSTRNGIRVWLGTFESAEEAALAYDQAAFSMRGSSAILNFSAERVQESLSEIKYTYEDGCSPVVALKRKHSMRRRMTNKKTKDSDFDHRSVKLDNVVVFEDLGEQYLEELLGSSENSGTW</sequence>
<feature type="chain" id="PRO_0000112543" description="Ethylene-responsive transcription factor 1B">
    <location>
        <begin position="1"/>
        <end position="218"/>
    </location>
</feature>
<feature type="DNA-binding region" description="AP2/ERF" evidence="3">
    <location>
        <begin position="81"/>
        <end position="139"/>
    </location>
</feature>
<feature type="region of interest" description="Disordered" evidence="4">
    <location>
        <begin position="1"/>
        <end position="38"/>
    </location>
</feature>
<feature type="short sequence motif" description="Nuclear localization signal" evidence="2">
    <location>
        <begin position="165"/>
        <end position="181"/>
    </location>
</feature>
<feature type="compositionally biased region" description="Low complexity" evidence="4">
    <location>
        <begin position="18"/>
        <end position="35"/>
    </location>
</feature>
<feature type="sequence conflict" description="In Ref. 5; AAM63284." evidence="13" ref="5">
    <original>F</original>
    <variation>L</variation>
    <location>
        <position position="4"/>
    </location>
</feature>
<feature type="sequence conflict" description="In Ref. 5; AAM63284." evidence="13" ref="5">
    <original>D</original>
    <variation>E</variation>
    <location>
        <position position="24"/>
    </location>
</feature>
<feature type="sequence conflict" description="In Ref. 5; AAM63284." evidence="13" ref="5">
    <original>DS</original>
    <variation>EL</variation>
    <location>
        <begin position="64"/>
        <end position="65"/>
    </location>
</feature>
<feature type="sequence conflict" description="In Ref. 5; AAM63284." evidence="13" ref="5">
    <original>Y</original>
    <variation>C</variation>
    <location>
        <position position="152"/>
    </location>
</feature>
<gene>
    <name type="primary">ERF1B</name>
    <name type="synonym">ERF092</name>
    <name type="synonym">ERF1</name>
    <name type="ordered locus">At3g23240</name>
    <name type="ORF">K14B15.15</name>
</gene>
<protein>
    <recommendedName>
        <fullName>Ethylene-responsive transcription factor 1B</fullName>
        <shortName>AtERF1B</shortName>
    </recommendedName>
    <alternativeName>
        <fullName>Ethylene-responsive element-binding factor 1B</fullName>
        <shortName>EREBP-1B</shortName>
    </alternativeName>
</protein>
<name>ERF92_ARATH</name>
<evidence type="ECO:0000250" key="1"/>
<evidence type="ECO:0000255" key="2"/>
<evidence type="ECO:0000255" key="3">
    <source>
        <dbReference type="PROSITE-ProRule" id="PRU00366"/>
    </source>
</evidence>
<evidence type="ECO:0000256" key="4">
    <source>
        <dbReference type="SAM" id="MobiDB-lite"/>
    </source>
</evidence>
<evidence type="ECO:0000269" key="5">
    <source>
    </source>
</evidence>
<evidence type="ECO:0000269" key="6">
    <source>
    </source>
</evidence>
<evidence type="ECO:0000269" key="7">
    <source>
    </source>
</evidence>
<evidence type="ECO:0000269" key="8">
    <source>
    </source>
</evidence>
<evidence type="ECO:0000269" key="9">
    <source>
    </source>
</evidence>
<evidence type="ECO:0000269" key="10">
    <source>
    </source>
</evidence>
<evidence type="ECO:0000269" key="11">
    <source>
    </source>
</evidence>
<evidence type="ECO:0000269" key="12">
    <source>
    </source>
</evidence>
<evidence type="ECO:0000305" key="13"/>
<accession>Q8LDC8</accession>
<accession>Q9ZNR2</accession>